<protein>
    <recommendedName>
        <fullName>Parvalbumin alpha</fullName>
    </recommendedName>
    <alternativeName>
        <fullName>Parvalbumin pI 4.97</fullName>
        <shortName>PA 4.97</shortName>
    </alternativeName>
</protein>
<comment type="function">
    <text evidence="1">In muscle, parvalbumin is thought to be involved in relaxation after contraction. It binds two calcium ions (By similarity).</text>
</comment>
<comment type="miscellaneous">
    <text>This parvalbumin has an isoelectric point of 4.97.</text>
</comment>
<comment type="similarity">
    <text evidence="4">Belongs to the parvalbumin family.</text>
</comment>
<feature type="chain" id="PRO_0000073598" description="Parvalbumin alpha">
    <location>
        <begin position="1"/>
        <end position="110"/>
    </location>
</feature>
<feature type="domain" description="EF-hand 1" evidence="3">
    <location>
        <begin position="39"/>
        <end position="74"/>
    </location>
</feature>
<feature type="domain" description="EF-hand 2" evidence="3">
    <location>
        <begin position="78"/>
        <end position="110"/>
    </location>
</feature>
<feature type="binding site" evidence="3">
    <location>
        <position position="52"/>
    </location>
    <ligand>
        <name>Ca(2+)</name>
        <dbReference type="ChEBI" id="CHEBI:29108"/>
        <label>1</label>
    </ligand>
</feature>
<feature type="binding site" evidence="3">
    <location>
        <position position="54"/>
    </location>
    <ligand>
        <name>Ca(2+)</name>
        <dbReference type="ChEBI" id="CHEBI:29108"/>
        <label>1</label>
    </ligand>
</feature>
<feature type="binding site" evidence="3">
    <location>
        <position position="56"/>
    </location>
    <ligand>
        <name>Ca(2+)</name>
        <dbReference type="ChEBI" id="CHEBI:29108"/>
        <label>1</label>
    </ligand>
</feature>
<feature type="binding site" evidence="2">
    <location>
        <position position="58"/>
    </location>
    <ligand>
        <name>Ca(2+)</name>
        <dbReference type="ChEBI" id="CHEBI:29108"/>
        <label>1</label>
    </ligand>
</feature>
<feature type="binding site" evidence="2">
    <location>
        <position position="60"/>
    </location>
    <ligand>
        <name>Ca(2+)</name>
        <dbReference type="ChEBI" id="CHEBI:29108"/>
        <label>1</label>
    </ligand>
</feature>
<feature type="binding site" evidence="3">
    <location>
        <position position="63"/>
    </location>
    <ligand>
        <name>Ca(2+)</name>
        <dbReference type="ChEBI" id="CHEBI:29108"/>
        <label>1</label>
    </ligand>
</feature>
<feature type="binding site" evidence="3">
    <location>
        <position position="91"/>
    </location>
    <ligand>
        <name>Ca(2+)</name>
        <dbReference type="ChEBI" id="CHEBI:29108"/>
        <label>2</label>
    </ligand>
</feature>
<feature type="binding site" evidence="3">
    <location>
        <position position="93"/>
    </location>
    <ligand>
        <name>Ca(2+)</name>
        <dbReference type="ChEBI" id="CHEBI:29108"/>
        <label>2</label>
    </ligand>
</feature>
<feature type="binding site" evidence="3">
    <location>
        <position position="95"/>
    </location>
    <ligand>
        <name>Ca(2+)</name>
        <dbReference type="ChEBI" id="CHEBI:29108"/>
        <label>2</label>
    </ligand>
</feature>
<feature type="binding site" evidence="3">
    <location>
        <position position="97"/>
    </location>
    <ligand>
        <name>Ca(2+)</name>
        <dbReference type="ChEBI" id="CHEBI:29108"/>
        <label>2</label>
    </ligand>
</feature>
<feature type="binding site" evidence="3">
    <location>
        <position position="102"/>
    </location>
    <ligand>
        <name>Ca(2+)</name>
        <dbReference type="ChEBI" id="CHEBI:29108"/>
        <label>2</label>
    </ligand>
</feature>
<name>PRVA_AQUCT</name>
<evidence type="ECO:0000250" key="1"/>
<evidence type="ECO:0000250" key="2">
    <source>
        <dbReference type="UniProtKB" id="P02628"/>
    </source>
</evidence>
<evidence type="ECO:0000255" key="3">
    <source>
        <dbReference type="PROSITE-ProRule" id="PRU00448"/>
    </source>
</evidence>
<evidence type="ECO:0000305" key="4"/>
<proteinExistence type="evidence at protein level"/>
<organism>
    <name type="scientific">Aquarana catesbeiana</name>
    <name type="common">American bullfrog</name>
    <name type="synonym">Rana catesbeiana</name>
    <dbReference type="NCBI Taxonomy" id="8400"/>
    <lineage>
        <taxon>Eukaryota</taxon>
        <taxon>Metazoa</taxon>
        <taxon>Chordata</taxon>
        <taxon>Craniata</taxon>
        <taxon>Vertebrata</taxon>
        <taxon>Euteleostomi</taxon>
        <taxon>Amphibia</taxon>
        <taxon>Batrachia</taxon>
        <taxon>Anura</taxon>
        <taxon>Neobatrachia</taxon>
        <taxon>Ranoidea</taxon>
        <taxon>Ranidae</taxon>
        <taxon>Aquarana</taxon>
    </lineage>
</organism>
<reference key="1">
    <citation type="journal article" date="1990" name="FEBS Lett.">
        <title>The complete amino acid sequence of bullfrog (Rana catesbeiana) parvalbumin pI4.97.</title>
        <authorList>
            <person name="Sasaki T."/>
            <person name="Tanokura M."/>
            <person name="Asaoka K."/>
        </authorList>
    </citation>
    <scope>PROTEIN SEQUENCE</scope>
    <source>
        <tissue>Skeletal muscle</tissue>
    </source>
</reference>
<reference key="2">
    <citation type="journal article" date="2003" name="Biochim. Biophys. Acta">
        <title>Postmetamorphic changes in parvalbumin expression in the hindlimb skeletal muscle of the bullfrog, Rana catesbeiana.</title>
        <authorList>
            <person name="Hasebe T."/>
            <person name="Umezawa K."/>
            <person name="Sugita M."/>
            <person name="Iwata T."/>
            <person name="Yamamoto K."/>
            <person name="Obinata T."/>
            <person name="Kikuyama S."/>
        </authorList>
    </citation>
    <scope>NUCLEOTIDE SEQUENCE [MRNA]</scope>
    <source>
        <tissue>Skeletal muscle</tissue>
    </source>
</reference>
<keyword id="KW-0106">Calcium</keyword>
<keyword id="KW-0903">Direct protein sequencing</keyword>
<keyword id="KW-0479">Metal-binding</keyword>
<keyword id="KW-0514">Muscle protein</keyword>
<keyword id="KW-0677">Repeat</keyword>
<dbReference type="EMBL" id="AB088845">
    <property type="protein sequence ID" value="BAC55948.1"/>
    <property type="molecule type" value="mRNA"/>
</dbReference>
<dbReference type="PIR" id="S11054">
    <property type="entry name" value="S11054"/>
</dbReference>
<dbReference type="SMR" id="P18087"/>
<dbReference type="GO" id="GO:0005737">
    <property type="term" value="C:cytoplasm"/>
    <property type="evidence" value="ECO:0007669"/>
    <property type="project" value="TreeGrafter"/>
</dbReference>
<dbReference type="GO" id="GO:0005509">
    <property type="term" value="F:calcium ion binding"/>
    <property type="evidence" value="ECO:0007669"/>
    <property type="project" value="InterPro"/>
</dbReference>
<dbReference type="CDD" id="cd16254">
    <property type="entry name" value="EFh_parvalbumin_alpha"/>
    <property type="match status" value="1"/>
</dbReference>
<dbReference type="FunFam" id="1.10.238.10:FF:000060">
    <property type="entry name" value="Parvalbumin, thymic"/>
    <property type="match status" value="1"/>
</dbReference>
<dbReference type="Gene3D" id="1.10.238.10">
    <property type="entry name" value="EF-hand"/>
    <property type="match status" value="1"/>
</dbReference>
<dbReference type="InterPro" id="IPR011992">
    <property type="entry name" value="EF-hand-dom_pair"/>
</dbReference>
<dbReference type="InterPro" id="IPR018247">
    <property type="entry name" value="EF_Hand_1_Ca_BS"/>
</dbReference>
<dbReference type="InterPro" id="IPR002048">
    <property type="entry name" value="EF_hand_dom"/>
</dbReference>
<dbReference type="InterPro" id="IPR008080">
    <property type="entry name" value="Parvalbumin"/>
</dbReference>
<dbReference type="PANTHER" id="PTHR11653">
    <property type="entry name" value="PARVALBUMIN ALPHA"/>
    <property type="match status" value="1"/>
</dbReference>
<dbReference type="PANTHER" id="PTHR11653:SF2">
    <property type="entry name" value="PARVALBUMIN ALPHA"/>
    <property type="match status" value="1"/>
</dbReference>
<dbReference type="Pfam" id="PF13499">
    <property type="entry name" value="EF-hand_7"/>
    <property type="match status" value="1"/>
</dbReference>
<dbReference type="PRINTS" id="PR01697">
    <property type="entry name" value="PARVALBUMIN"/>
</dbReference>
<dbReference type="SMART" id="SM00054">
    <property type="entry name" value="EFh"/>
    <property type="match status" value="2"/>
</dbReference>
<dbReference type="SUPFAM" id="SSF47473">
    <property type="entry name" value="EF-hand"/>
    <property type="match status" value="1"/>
</dbReference>
<dbReference type="PROSITE" id="PS00018">
    <property type="entry name" value="EF_HAND_1"/>
    <property type="match status" value="2"/>
</dbReference>
<dbReference type="PROSITE" id="PS50222">
    <property type="entry name" value="EF_HAND_2"/>
    <property type="match status" value="2"/>
</dbReference>
<accession>P18087</accession>
<accession>Q54A56</accession>
<sequence length="110" mass="11920">MHMTDVLPAGDISKAVEAFAAPDSFNHKKFFEMCGLKSKGPDVMKQVFGILDQDRSGFIEEDELCLMLKGFTPNARSLSVKETTALLAAGDKDGDGKIGMDEFVTLVSES</sequence>